<name>MSA2_PLAFK</name>
<sequence length="280" mass="29542">MKVIKTLSIINFFIFVTFNIKNGSKYSNTFINNAYNMSIRRSMANEGSNTKSVGANAPKADTIASGSQSSTNSASTSTTNNGESQTTTPTAADTPTATESNSRSPPITTTESNSRSPPITTTESNSRSPPITTTESNSRSPPITTTESNSRSPPITTTESSSSGNAPNKTDGKGEESEKQNELNESTEEGPKAPQEPQTAENENPAAPENKGTGQHGHMHGSRNNHPQNTSDSQKECTDGNKENCGAATSLLNNSSNIASINKFVVLISATLVLSFAIFI</sequence>
<gene>
    <name evidence="3" type="primary">MSP2</name>
    <name evidence="7" type="synonym">MSA2</name>
</gene>
<feature type="signal peptide" evidence="4">
    <location>
        <begin position="1"/>
        <end position="20"/>
    </location>
</feature>
<feature type="chain" id="PRO_0000024602" description="Merozoite surface protein 2">
    <location>
        <begin position="21"/>
        <end position="254"/>
    </location>
</feature>
<feature type="propeptide" id="PRO_0000024603" description="Removed in mature form" evidence="1">
    <location>
        <begin position="255"/>
        <end position="280"/>
    </location>
</feature>
<feature type="repeat" description="1" evidence="6">
    <location>
        <begin position="105"/>
        <end position="116"/>
    </location>
</feature>
<feature type="repeat" description="2" evidence="6">
    <location>
        <begin position="117"/>
        <end position="128"/>
    </location>
</feature>
<feature type="repeat" description="3" evidence="6">
    <location>
        <begin position="129"/>
        <end position="140"/>
    </location>
</feature>
<feature type="repeat" description="4" evidence="6">
    <location>
        <begin position="141"/>
        <end position="152"/>
    </location>
</feature>
<feature type="repeat" description="5; partial" evidence="6">
    <location>
        <begin position="153"/>
        <end position="160"/>
    </location>
</feature>
<feature type="region of interest" description="Polymorphic region" evidence="6">
    <location>
        <begin position="44"/>
        <end position="206"/>
    </location>
</feature>
<feature type="region of interest" description="Disordered" evidence="5">
    <location>
        <begin position="47"/>
        <end position="242"/>
    </location>
</feature>
<feature type="region of interest" description="5 X 12 AA tandem repeats of P-P-I-T-T-T-E-S-N-S-R-S" evidence="6">
    <location>
        <begin position="51"/>
        <end position="74"/>
    </location>
</feature>
<feature type="compositionally biased region" description="Low complexity" evidence="5">
    <location>
        <begin position="64"/>
        <end position="98"/>
    </location>
</feature>
<feature type="compositionally biased region" description="Polar residues" evidence="5">
    <location>
        <begin position="99"/>
        <end position="149"/>
    </location>
</feature>
<feature type="compositionally biased region" description="Low complexity" evidence="5">
    <location>
        <begin position="150"/>
        <end position="163"/>
    </location>
</feature>
<feature type="compositionally biased region" description="Basic and acidic residues" evidence="5">
    <location>
        <begin position="170"/>
        <end position="182"/>
    </location>
</feature>
<feature type="compositionally biased region" description="Basic and acidic residues" evidence="5">
    <location>
        <begin position="233"/>
        <end position="242"/>
    </location>
</feature>
<feature type="lipid moiety-binding region" description="GPI-anchor amidated asparagine" evidence="1">
    <location>
        <position position="254"/>
    </location>
</feature>
<feature type="glycosylation site" description="N-linked (GlcNAc...) asparagine" evidence="4">
    <location>
        <position position="22"/>
    </location>
</feature>
<feature type="glycosylation site" description="N-linked (GlcNAc...) asparagine" evidence="4">
    <location>
        <position position="36"/>
    </location>
</feature>
<feature type="glycosylation site" description="N-linked (GlcNAc...) asparagine" evidence="4">
    <location>
        <position position="168"/>
    </location>
</feature>
<feature type="glycosylation site" description="N-linked (GlcNAc...) asparagine" evidence="4">
    <location>
        <position position="184"/>
    </location>
</feature>
<feature type="glycosylation site" description="N-linked (GlcNAc...) asparagine" evidence="4">
    <location>
        <position position="229"/>
    </location>
</feature>
<feature type="glycosylation site" description="N-linked (GlcNAc...) asparagine" evidence="4">
    <location>
        <position position="253"/>
    </location>
</feature>
<feature type="glycosylation site" description="N-linked (GlcNAc...) asparagine" evidence="4">
    <location>
        <position position="254"/>
    </location>
</feature>
<feature type="disulfide bond" evidence="2">
    <location>
        <begin position="237"/>
        <end position="245"/>
    </location>
</feature>
<protein>
    <recommendedName>
        <fullName evidence="3">Merozoite surface protein 2</fullName>
    </recommendedName>
    <alternativeName>
        <fullName evidence="7">Merozoite surface antigen 2</fullName>
        <shortName evidence="7">MSA-2</shortName>
    </alternativeName>
</protein>
<proteinExistence type="inferred from homology"/>
<keyword id="KW-1003">Cell membrane</keyword>
<keyword id="KW-1015">Disulfide bond</keyword>
<keyword id="KW-0325">Glycoprotein</keyword>
<keyword id="KW-0336">GPI-anchor</keyword>
<keyword id="KW-0449">Lipoprotein</keyword>
<keyword id="KW-0461">Malaria</keyword>
<keyword id="KW-0472">Membrane</keyword>
<keyword id="KW-0477">Merozoite</keyword>
<keyword id="KW-0677">Repeat</keyword>
<keyword id="KW-0732">Signal</keyword>
<comment type="function">
    <text evidence="2">May play a role in the merozoite attachment to the erythrocyte.</text>
</comment>
<comment type="subcellular location">
    <subcellularLocation>
        <location evidence="2">Cell membrane</location>
        <topology evidence="1">Lipid-anchor</topology>
        <topology evidence="1">GPI-anchor</topology>
    </subcellularLocation>
    <text evidence="2">During host erythrocyte invasion by merozoites, carried into invaded erythrocytes where it is rapidly degraded.</text>
</comment>
<comment type="domain">
    <text evidence="2">The N-terminal region appears to be involved in lipid binding.</text>
</comment>
<comment type="polymorphism">
    <text evidence="6">The sequence varies across Plasmodium strains (PubMed:2000383). All variants share conserved N- and C-terminal regions; however, they belong to two allelic families, represented by 3D7 strain and FC27 strain sequences respectively, distinguished by tandem repeats and dimorphic flanking sequences within the central region of the protein (PubMed:2000383).</text>
</comment>
<organism>
    <name type="scientific">Plasmodium falciparum (isolate K1 / Thailand)</name>
    <dbReference type="NCBI Taxonomy" id="5839"/>
    <lineage>
        <taxon>Eukaryota</taxon>
        <taxon>Sar</taxon>
        <taxon>Alveolata</taxon>
        <taxon>Apicomplexa</taxon>
        <taxon>Aconoidasida</taxon>
        <taxon>Haemosporida</taxon>
        <taxon>Plasmodiidae</taxon>
        <taxon>Plasmodium</taxon>
        <taxon>Plasmodium (Laverania)</taxon>
    </lineage>
</organism>
<reference key="1">
    <citation type="journal article" date="1991" name="Proc. Natl. Acad. Sci. U.S.A.">
        <title>Structural diversity in the Plasmodium falciparum merozoite surface antigen 2.</title>
        <authorList>
            <person name="Smythe J.A."/>
            <person name="Coppel R.L."/>
            <person name="Day K.P."/>
            <person name="Martin R.K."/>
            <person name="Oduola A.M.J."/>
            <person name="Kemp D.J."/>
            <person name="Anders R.F."/>
        </authorList>
    </citation>
    <scope>NUCLEOTIDE SEQUENCE [GENOMIC DNA]</scope>
    <scope>POLYMORPHISM</scope>
    <scope>REPEATS</scope>
</reference>
<evidence type="ECO:0000250" key="1">
    <source>
        <dbReference type="UniProtKB" id="P19260"/>
    </source>
</evidence>
<evidence type="ECO:0000250" key="2">
    <source>
        <dbReference type="UniProtKB" id="P19599"/>
    </source>
</evidence>
<evidence type="ECO:0000250" key="3">
    <source>
        <dbReference type="UniProtKB" id="P50498"/>
    </source>
</evidence>
<evidence type="ECO:0000255" key="4"/>
<evidence type="ECO:0000256" key="5">
    <source>
        <dbReference type="SAM" id="MobiDB-lite"/>
    </source>
</evidence>
<evidence type="ECO:0000269" key="6">
    <source>
    </source>
</evidence>
<evidence type="ECO:0000303" key="7">
    <source>
    </source>
</evidence>
<dbReference type="EMBL" id="M59766">
    <property type="protein sequence ID" value="AAA29693.1"/>
    <property type="molecule type" value="Genomic_DNA"/>
</dbReference>
<dbReference type="GlyCosmos" id="Q03643">
    <property type="glycosylation" value="7 sites, No reported glycans"/>
</dbReference>
<dbReference type="ABCD" id="Q03643">
    <property type="antibodies" value="2 sequenced antibodies"/>
</dbReference>
<dbReference type="GO" id="GO:0005886">
    <property type="term" value="C:plasma membrane"/>
    <property type="evidence" value="ECO:0007669"/>
    <property type="project" value="UniProtKB-SubCell"/>
</dbReference>
<dbReference type="GO" id="GO:0098552">
    <property type="term" value="C:side of membrane"/>
    <property type="evidence" value="ECO:0007669"/>
    <property type="project" value="UniProtKB-KW"/>
</dbReference>
<dbReference type="GO" id="GO:0007155">
    <property type="term" value="P:cell adhesion"/>
    <property type="evidence" value="ECO:0007669"/>
    <property type="project" value="InterPro"/>
</dbReference>
<dbReference type="InterPro" id="IPR001136">
    <property type="entry name" value="MSA2"/>
</dbReference>
<dbReference type="Pfam" id="PF00985">
    <property type="entry name" value="MSA_2"/>
    <property type="match status" value="1"/>
</dbReference>
<dbReference type="PIRSF" id="PIRSF003575">
    <property type="entry name" value="MSA_2"/>
    <property type="match status" value="1"/>
</dbReference>
<accession>Q03643</accession>